<organism>
    <name type="scientific">Listeria monocytogenes serotype 4b (strain CLIP80459)</name>
    <dbReference type="NCBI Taxonomy" id="568819"/>
    <lineage>
        <taxon>Bacteria</taxon>
        <taxon>Bacillati</taxon>
        <taxon>Bacillota</taxon>
        <taxon>Bacilli</taxon>
        <taxon>Bacillales</taxon>
        <taxon>Listeriaceae</taxon>
        <taxon>Listeria</taxon>
    </lineage>
</organism>
<reference key="1">
    <citation type="journal article" date="2012" name="BMC Genomics">
        <title>Comparative genomics and transcriptomics of lineages I, II, and III strains of Listeria monocytogenes.</title>
        <authorList>
            <person name="Hain T."/>
            <person name="Ghai R."/>
            <person name="Billion A."/>
            <person name="Kuenne C.T."/>
            <person name="Steinweg C."/>
            <person name="Izar B."/>
            <person name="Mohamed W."/>
            <person name="Mraheil M."/>
            <person name="Domann E."/>
            <person name="Schaffrath S."/>
            <person name="Karst U."/>
            <person name="Goesmann A."/>
            <person name="Oehm S."/>
            <person name="Puhler A."/>
            <person name="Merkl R."/>
            <person name="Vorwerk S."/>
            <person name="Glaser P."/>
            <person name="Garrido P."/>
            <person name="Rusniok C."/>
            <person name="Buchrieser C."/>
            <person name="Goebel W."/>
            <person name="Chakraborty T."/>
        </authorList>
    </citation>
    <scope>NUCLEOTIDE SEQUENCE [LARGE SCALE GENOMIC DNA]</scope>
    <source>
        <strain>CLIP80459</strain>
    </source>
</reference>
<dbReference type="EMBL" id="FM242711">
    <property type="protein sequence ID" value="CAS05042.1"/>
    <property type="molecule type" value="Genomic_DNA"/>
</dbReference>
<dbReference type="RefSeq" id="WP_003723886.1">
    <property type="nucleotide sequence ID" value="NC_012488.1"/>
</dbReference>
<dbReference type="SMR" id="C1L2H6"/>
<dbReference type="KEGG" id="lmc:Lm4b_01278"/>
<dbReference type="HOGENOM" id="CLU_014218_8_2_9"/>
<dbReference type="GO" id="GO:0009376">
    <property type="term" value="C:HslUV protease complex"/>
    <property type="evidence" value="ECO:0007669"/>
    <property type="project" value="TreeGrafter"/>
</dbReference>
<dbReference type="GO" id="GO:0005524">
    <property type="term" value="F:ATP binding"/>
    <property type="evidence" value="ECO:0007669"/>
    <property type="project" value="UniProtKB-UniRule"/>
</dbReference>
<dbReference type="GO" id="GO:0016887">
    <property type="term" value="F:ATP hydrolysis activity"/>
    <property type="evidence" value="ECO:0007669"/>
    <property type="project" value="InterPro"/>
</dbReference>
<dbReference type="GO" id="GO:0140662">
    <property type="term" value="F:ATP-dependent protein folding chaperone"/>
    <property type="evidence" value="ECO:0007669"/>
    <property type="project" value="InterPro"/>
</dbReference>
<dbReference type="GO" id="GO:0046983">
    <property type="term" value="F:protein dimerization activity"/>
    <property type="evidence" value="ECO:0007669"/>
    <property type="project" value="InterPro"/>
</dbReference>
<dbReference type="GO" id="GO:0051082">
    <property type="term" value="F:unfolded protein binding"/>
    <property type="evidence" value="ECO:0007669"/>
    <property type="project" value="UniProtKB-UniRule"/>
</dbReference>
<dbReference type="GO" id="GO:0008270">
    <property type="term" value="F:zinc ion binding"/>
    <property type="evidence" value="ECO:0007669"/>
    <property type="project" value="InterPro"/>
</dbReference>
<dbReference type="GO" id="GO:0051301">
    <property type="term" value="P:cell division"/>
    <property type="evidence" value="ECO:0007669"/>
    <property type="project" value="TreeGrafter"/>
</dbReference>
<dbReference type="GO" id="GO:0051603">
    <property type="term" value="P:proteolysis involved in protein catabolic process"/>
    <property type="evidence" value="ECO:0007669"/>
    <property type="project" value="TreeGrafter"/>
</dbReference>
<dbReference type="CDD" id="cd19497">
    <property type="entry name" value="RecA-like_ClpX"/>
    <property type="match status" value="1"/>
</dbReference>
<dbReference type="FunFam" id="1.10.8.60:FF:000002">
    <property type="entry name" value="ATP-dependent Clp protease ATP-binding subunit ClpX"/>
    <property type="match status" value="1"/>
</dbReference>
<dbReference type="FunFam" id="3.40.50.300:FF:000005">
    <property type="entry name" value="ATP-dependent Clp protease ATP-binding subunit ClpX"/>
    <property type="match status" value="1"/>
</dbReference>
<dbReference type="Gene3D" id="1.10.8.60">
    <property type="match status" value="1"/>
</dbReference>
<dbReference type="Gene3D" id="6.20.220.10">
    <property type="entry name" value="ClpX chaperone, C4-type zinc finger domain"/>
    <property type="match status" value="1"/>
</dbReference>
<dbReference type="Gene3D" id="3.40.50.300">
    <property type="entry name" value="P-loop containing nucleotide triphosphate hydrolases"/>
    <property type="match status" value="1"/>
</dbReference>
<dbReference type="HAMAP" id="MF_00175">
    <property type="entry name" value="ClpX"/>
    <property type="match status" value="1"/>
</dbReference>
<dbReference type="InterPro" id="IPR003593">
    <property type="entry name" value="AAA+_ATPase"/>
</dbReference>
<dbReference type="InterPro" id="IPR050052">
    <property type="entry name" value="ATP-dep_Clp_protease_ClpX"/>
</dbReference>
<dbReference type="InterPro" id="IPR003959">
    <property type="entry name" value="ATPase_AAA_core"/>
</dbReference>
<dbReference type="InterPro" id="IPR019489">
    <property type="entry name" value="Clp_ATPase_C"/>
</dbReference>
<dbReference type="InterPro" id="IPR004487">
    <property type="entry name" value="Clp_protease_ATP-bd_su_ClpX"/>
</dbReference>
<dbReference type="InterPro" id="IPR046425">
    <property type="entry name" value="ClpX_bact"/>
</dbReference>
<dbReference type="InterPro" id="IPR027417">
    <property type="entry name" value="P-loop_NTPase"/>
</dbReference>
<dbReference type="InterPro" id="IPR010603">
    <property type="entry name" value="Znf_CppX_C4"/>
</dbReference>
<dbReference type="InterPro" id="IPR038366">
    <property type="entry name" value="Znf_CppX_C4_sf"/>
</dbReference>
<dbReference type="NCBIfam" id="TIGR00382">
    <property type="entry name" value="clpX"/>
    <property type="match status" value="1"/>
</dbReference>
<dbReference type="NCBIfam" id="NF003745">
    <property type="entry name" value="PRK05342.1"/>
    <property type="match status" value="1"/>
</dbReference>
<dbReference type="PANTHER" id="PTHR48102:SF7">
    <property type="entry name" value="ATP-DEPENDENT CLP PROTEASE ATP-BINDING SUBUNIT CLPX-LIKE, MITOCHONDRIAL"/>
    <property type="match status" value="1"/>
</dbReference>
<dbReference type="PANTHER" id="PTHR48102">
    <property type="entry name" value="ATP-DEPENDENT CLP PROTEASE ATP-BINDING SUBUNIT CLPX-LIKE, MITOCHONDRIAL-RELATED"/>
    <property type="match status" value="1"/>
</dbReference>
<dbReference type="Pfam" id="PF07724">
    <property type="entry name" value="AAA_2"/>
    <property type="match status" value="1"/>
</dbReference>
<dbReference type="Pfam" id="PF10431">
    <property type="entry name" value="ClpB_D2-small"/>
    <property type="match status" value="1"/>
</dbReference>
<dbReference type="Pfam" id="PF06689">
    <property type="entry name" value="zf-C4_ClpX"/>
    <property type="match status" value="1"/>
</dbReference>
<dbReference type="SMART" id="SM00382">
    <property type="entry name" value="AAA"/>
    <property type="match status" value="1"/>
</dbReference>
<dbReference type="SMART" id="SM01086">
    <property type="entry name" value="ClpB_D2-small"/>
    <property type="match status" value="1"/>
</dbReference>
<dbReference type="SMART" id="SM00994">
    <property type="entry name" value="zf-C4_ClpX"/>
    <property type="match status" value="1"/>
</dbReference>
<dbReference type="SUPFAM" id="SSF57716">
    <property type="entry name" value="Glucocorticoid receptor-like (DNA-binding domain)"/>
    <property type="match status" value="1"/>
</dbReference>
<dbReference type="SUPFAM" id="SSF52540">
    <property type="entry name" value="P-loop containing nucleoside triphosphate hydrolases"/>
    <property type="match status" value="1"/>
</dbReference>
<dbReference type="PROSITE" id="PS51902">
    <property type="entry name" value="CLPX_ZB"/>
    <property type="match status" value="1"/>
</dbReference>
<proteinExistence type="inferred from homology"/>
<name>CLPX_LISMC</name>
<keyword id="KW-0067">ATP-binding</keyword>
<keyword id="KW-0143">Chaperone</keyword>
<keyword id="KW-0479">Metal-binding</keyword>
<keyword id="KW-0547">Nucleotide-binding</keyword>
<keyword id="KW-0862">Zinc</keyword>
<protein>
    <recommendedName>
        <fullName evidence="1">ATP-dependent Clp protease ATP-binding subunit ClpX</fullName>
    </recommendedName>
</protein>
<comment type="function">
    <text evidence="1">ATP-dependent specificity component of the Clp protease. It directs the protease to specific substrates. Can perform chaperone functions in the absence of ClpP.</text>
</comment>
<comment type="subunit">
    <text evidence="1">Component of the ClpX-ClpP complex. Forms a hexameric ring that, in the presence of ATP, binds to fourteen ClpP subunits assembled into a disk-like structure with a central cavity, resembling the structure of eukaryotic proteasomes.</text>
</comment>
<comment type="similarity">
    <text evidence="1">Belongs to the ClpX chaperone family.</text>
</comment>
<sequence length="419" mass="46398">MFKFNDEKGQLKCSFCGKTQDQVRKLVAGPGVYICDECIELCNEIIEEELGISEFVDFGEVPKPQEIRHILSDYVIGQERAKKALAVAVYNHYKRINSNETKEDEVELSKSNICLIGPTGSGKTLLAQTLARILNVPFAIADATSLTEAGYVGEDVENILLKLIQSADYDVEKAEKGIIYIDEIDKVARKSENPSITRDVSGEGVQQALLKILEGTVASVPPQGGRKHPHQELIQIDTGNILFIVGGAFDGIEQIVKNRMGEKVIGFGTDNAKLKDDETYLSRVVPEDLLKFGLIPEFIGRLPVIATLEQLDEAALVSILTEPKNALVKQYKRMLELDDVELEFEPTALIEIAKEAIERKTGARGLRSIIEQIMLEVMFEIPSRDDITKCIITEKAARGEEEPQLQLEDGSIIPIKTSA</sequence>
<gene>
    <name evidence="1" type="primary">clpX</name>
    <name type="ordered locus">Lm4b_01278</name>
</gene>
<feature type="chain" id="PRO_1000203736" description="ATP-dependent Clp protease ATP-binding subunit ClpX">
    <location>
        <begin position="1"/>
        <end position="419"/>
    </location>
</feature>
<feature type="domain" description="ClpX-type ZB" evidence="2">
    <location>
        <begin position="1"/>
        <end position="54"/>
    </location>
</feature>
<feature type="binding site" evidence="2">
    <location>
        <position position="13"/>
    </location>
    <ligand>
        <name>Zn(2+)</name>
        <dbReference type="ChEBI" id="CHEBI:29105"/>
    </ligand>
</feature>
<feature type="binding site" evidence="2">
    <location>
        <position position="16"/>
    </location>
    <ligand>
        <name>Zn(2+)</name>
        <dbReference type="ChEBI" id="CHEBI:29105"/>
    </ligand>
</feature>
<feature type="binding site" evidence="2">
    <location>
        <position position="35"/>
    </location>
    <ligand>
        <name>Zn(2+)</name>
        <dbReference type="ChEBI" id="CHEBI:29105"/>
    </ligand>
</feature>
<feature type="binding site" evidence="2">
    <location>
        <position position="38"/>
    </location>
    <ligand>
        <name>Zn(2+)</name>
        <dbReference type="ChEBI" id="CHEBI:29105"/>
    </ligand>
</feature>
<feature type="binding site" evidence="1">
    <location>
        <begin position="118"/>
        <end position="125"/>
    </location>
    <ligand>
        <name>ATP</name>
        <dbReference type="ChEBI" id="CHEBI:30616"/>
    </ligand>
</feature>
<accession>C1L2H6</accession>
<evidence type="ECO:0000255" key="1">
    <source>
        <dbReference type="HAMAP-Rule" id="MF_00175"/>
    </source>
</evidence>
<evidence type="ECO:0000255" key="2">
    <source>
        <dbReference type="PROSITE-ProRule" id="PRU01250"/>
    </source>
</evidence>